<name>DDX24_HUMAN</name>
<proteinExistence type="evidence at protein level"/>
<comment type="function">
    <text evidence="1 6 7 8 9">ATP-dependent RNA helicase that plays a role in various aspects of RNA metabolism including pre-mRNA splicing and is thereby involved in different biological processes such as cell cycle regulation or innate immunity (PubMed:24204270, PubMed:24980433). Plays an inhibitory role in TP53 transcriptional activity and subsequently in TP53 controlled cell growth arrest and senescence by inhibiting its EP300 mediated acetylation (PubMed:25867071). Negatively regulates cytosolic RNA-mediated innate immune signaling at least in part by affecting RIPK1/IRF7 interactions. Alternatively, possesses antiviral activity by recognizing gammaherpesvirus transcripts in the context of lytic reactivation (PubMed:36298642). Plays an essential role in cell cycle regulation in vascular smooth muscle cells by interacting with and regulating FANCA (Fanconi anemia complementation group A) mRNA (By similarity).</text>
</comment>
<comment type="function">
    <text evidence="5 6">(Microbial infection) Plays a positive role in HIV-1 infection by promoting Rev-dependent nuclear export of viral RNAs and their packaging into virus particles (PubMed:24204270).</text>
</comment>
<comment type="catalytic activity">
    <reaction>
        <text>ATP + H2O = ADP + phosphate + H(+)</text>
        <dbReference type="Rhea" id="RHEA:13065"/>
        <dbReference type="ChEBI" id="CHEBI:15377"/>
        <dbReference type="ChEBI" id="CHEBI:15378"/>
        <dbReference type="ChEBI" id="CHEBI:30616"/>
        <dbReference type="ChEBI" id="CHEBI:43474"/>
        <dbReference type="ChEBI" id="CHEBI:456216"/>
        <dbReference type="EC" id="3.6.4.13"/>
    </reaction>
</comment>
<comment type="subunit">
    <text evidence="6 7 8">Interacts with FADD (PubMed:24204270). Interacts with RIPK1; this interaction disrupts RLR signaling activation of IFN-dependent transcription factor IRF7 (PubMed:24204270). Interacts with NIP7 (PubMed:24980433). Interacts with EP300; this interaction prevents TP53 acetylation mediated by EP300 (PubMed:25867071).</text>
</comment>
<comment type="subunit">
    <text evidence="5">(Microbial infection) Interacts with HIV-1 virus Gag and Rev proteins.</text>
</comment>
<comment type="interaction">
    <interactant intactId="EBI-713081">
        <id>Q9GZR7</id>
    </interactant>
    <interactant intactId="EBI-347804">
        <id>P68400</id>
        <label>CSNK2A1</label>
    </interactant>
    <organismsDiffer>false</organismsDiffer>
    <experiments>3</experiments>
</comment>
<comment type="subcellular location">
    <subcellularLocation>
        <location evidence="6">Cytoplasm</location>
    </subcellularLocation>
    <subcellularLocation>
        <location evidence="6">Nucleus</location>
    </subcellularLocation>
</comment>
<comment type="alternative products">
    <event type="alternative splicing"/>
    <isoform>
        <id>Q9GZR7-1</id>
        <name>1</name>
        <sequence type="displayed"/>
    </isoform>
    <isoform>
        <id>Q9GZR7-2</id>
        <name>2</name>
        <sequence type="described" ref="VSP_053881"/>
    </isoform>
</comment>
<comment type="tissue specificity">
    <text>Ubiquitous. Most abundant in heart and brain, but with lowest levels in thymus and small intestine.</text>
</comment>
<comment type="induction">
    <text evidence="6">By type I interferons.</text>
</comment>
<comment type="PTM">
    <text evidence="7">Ubiquitinated by MDM2 without targeting DDX24 for proteasomal degradation. Instead, polyubiquitinated DDX24 promotes interaction with NIP7, a component of pre-rRNP processing complex, and associates with pre-rRNA molecules and pre-ribosomal particles.</text>
</comment>
<comment type="similarity">
    <text evidence="11">Belongs to the DEAD box helicase family. DDX24/MAK5 subfamily.</text>
</comment>
<sequence length="859" mass="96332">MKLKDTKSRPKQSSCGKFQTKGIKVVGKWKEVKIDPNMFADGQMDDLVCFEELTDYQLVSPAKNPSSLFSKEAPKRKAQAVSEEEEEEEGKSSSPKKKIKLKKSKNVATEGTSTQKEFEVKDPELEAQGDDMVCDDPEAGEMTSENLVQTAPKKKKNKGKKGLEPSQSTAAKVPKKAKTWIPEVHDQKADVSAWKDLFVPRPVLRALSFLGFSAPTPIQALTLAPAIRDKLDILGAAETGSGKTLAFAIPMIHAVLQWQKRNAAPPPSNTEAPPGETRTEAGAETRSPGKAEAESDALPDDTVIESEALPSDIAAEARAKTGGTVSDQALLFGDDDAGEGPSSLIREKPVPKQNENEEENLDKEQTGNLKQELDDKSATCKAYPKRPLLGLVLTPTRELAVQVKQHIDAVARFTGIKTAILVGGMSTQKQQRMLNRRPEIVVATPGRLWELIKEKHYHLRNLRQLRCLVVDEADRMVEKGHFAELSQLLEMLNDSQYNPKRQTLVFSATLTLVHQAPARILHKKHTKKMDKTAKLDLLMQKIGMRGKPKVIDLTRNEATVETLTETKIHCETDEKDFYLYYFLMQYPGRSLVFANSISCIKRLSGLLKVLDIMPLTLHACMHQKQRLRNLEQFARLEDCVLLATDVAARGLDIPKVQHVIHYQVPRTSEIYVHRSGRTARATNEGLSLMLIGPEDVINFKKIYKTLKKDEDIPLFPVQTKYMDVVKERIRLARQIEKSEYRNFQACLHNSWIEQAAAALEIELEEDMYKGGKADQQEERRRQKQMKVLKKELRHLLSQPLFTESQKTKYPTQSGKPPLLVSAPSKSESALSCLSKQKKKKTKKPKEPQPEQPQPSTSAN</sequence>
<accession>Q9GZR7</accession>
<accession>E7EMJ4</accession>
<accession>Q4V9L5</accession>
<gene>
    <name type="primary">DDX24</name>
</gene>
<feature type="chain" id="PRO_0000055029" description="ATP-dependent RNA helicase DDX24">
    <location>
        <begin position="1"/>
        <end position="859"/>
    </location>
</feature>
<feature type="domain" description="Helicase ATP-binding" evidence="2">
    <location>
        <begin position="224"/>
        <end position="528"/>
    </location>
</feature>
<feature type="domain" description="Helicase C-terminal" evidence="3">
    <location>
        <begin position="578"/>
        <end position="723"/>
    </location>
</feature>
<feature type="region of interest" description="Disordered" evidence="4">
    <location>
        <begin position="61"/>
        <end position="170"/>
    </location>
</feature>
<feature type="region of interest" description="Disordered" evidence="4">
    <location>
        <begin position="262"/>
        <end position="300"/>
    </location>
</feature>
<feature type="region of interest" description="Disordered" evidence="4">
    <location>
        <begin position="326"/>
        <end position="376"/>
    </location>
</feature>
<feature type="region of interest" description="Disordered" evidence="4">
    <location>
        <begin position="799"/>
        <end position="859"/>
    </location>
</feature>
<feature type="short sequence motif" description="Q motif">
    <location>
        <begin position="192"/>
        <end position="220"/>
    </location>
</feature>
<feature type="short sequence motif" description="DEAD box">
    <location>
        <begin position="471"/>
        <end position="474"/>
    </location>
</feature>
<feature type="compositionally biased region" description="Basic residues" evidence="4">
    <location>
        <begin position="94"/>
        <end position="105"/>
    </location>
</feature>
<feature type="compositionally biased region" description="Polar residues" evidence="4">
    <location>
        <begin position="106"/>
        <end position="115"/>
    </location>
</feature>
<feature type="compositionally biased region" description="Acidic residues" evidence="4">
    <location>
        <begin position="125"/>
        <end position="139"/>
    </location>
</feature>
<feature type="compositionally biased region" description="Basic and acidic residues" evidence="4">
    <location>
        <begin position="277"/>
        <end position="293"/>
    </location>
</feature>
<feature type="compositionally biased region" description="Polar residues" evidence="4">
    <location>
        <begin position="799"/>
        <end position="814"/>
    </location>
</feature>
<feature type="compositionally biased region" description="Polar residues" evidence="4">
    <location>
        <begin position="823"/>
        <end position="833"/>
    </location>
</feature>
<feature type="binding site" evidence="2">
    <location>
        <begin position="237"/>
        <end position="244"/>
    </location>
    <ligand>
        <name>ATP</name>
        <dbReference type="ChEBI" id="CHEBI:30616"/>
    </ligand>
</feature>
<feature type="modified residue" description="N6-acetyllysine" evidence="16">
    <location>
        <position position="17"/>
    </location>
</feature>
<feature type="modified residue" description="Phosphoserine" evidence="21">
    <location>
        <position position="60"/>
    </location>
</feature>
<feature type="modified residue" description="N6-acetyllysine" evidence="16">
    <location>
        <position position="71"/>
    </location>
</feature>
<feature type="modified residue" description="Phosphoserine" evidence="12 13 14 15 17 18 19 20">
    <location>
        <position position="82"/>
    </location>
</feature>
<feature type="modified residue" description="Phosphoserine" evidence="15 17 20">
    <location>
        <position position="94"/>
    </location>
</feature>
<feature type="modified residue" description="Phosphoserine" evidence="15 17">
    <location>
        <position position="287"/>
    </location>
</feature>
<feature type="modified residue" description="Phosphoserine" evidence="15 17">
    <location>
        <position position="295"/>
    </location>
</feature>
<feature type="modified residue" description="Phosphothreonine" evidence="15">
    <location>
        <position position="302"/>
    </location>
</feature>
<feature type="cross-link" description="Glycyl lysine isopeptide (Lys-Gly) (interchain with G-Cter in SUMO2)" evidence="22">
    <location>
        <position position="370"/>
    </location>
</feature>
<feature type="cross-link" description="Glycyl lysine isopeptide (Lys-Gly) (interchain with G-Cter in SUMO2)" evidence="22">
    <location>
        <position position="624"/>
    </location>
</feature>
<feature type="cross-link" description="Glycyl lysine isopeptide (Lys-Gly) (interchain with G-Cter in SUMO2)" evidence="22">
    <location>
        <position position="808"/>
    </location>
</feature>
<feature type="cross-link" description="Glycyl lysine isopeptide (Lys-Gly) (interchain with G-Cter in SUMO2)" evidence="22">
    <location>
        <position position="825"/>
    </location>
</feature>
<feature type="splice variant" id="VSP_053881" description="In isoform 2." evidence="10">
    <location>
        <begin position="171"/>
        <end position="225"/>
    </location>
</feature>
<feature type="sequence variant" id="VAR_052162" description="In dbSNP:rs35413935.">
    <original>E</original>
    <variation>K</variation>
    <location>
        <position position="316"/>
    </location>
</feature>
<evidence type="ECO:0000250" key="1">
    <source>
        <dbReference type="UniProtKB" id="Q9ESV0"/>
    </source>
</evidence>
<evidence type="ECO:0000255" key="2">
    <source>
        <dbReference type="PROSITE-ProRule" id="PRU00541"/>
    </source>
</evidence>
<evidence type="ECO:0000255" key="3">
    <source>
        <dbReference type="PROSITE-ProRule" id="PRU00542"/>
    </source>
</evidence>
<evidence type="ECO:0000256" key="4">
    <source>
        <dbReference type="SAM" id="MobiDB-lite"/>
    </source>
</evidence>
<evidence type="ECO:0000269" key="5">
    <source>
    </source>
</evidence>
<evidence type="ECO:0000269" key="6">
    <source>
    </source>
</evidence>
<evidence type="ECO:0000269" key="7">
    <source>
    </source>
</evidence>
<evidence type="ECO:0000269" key="8">
    <source>
    </source>
</evidence>
<evidence type="ECO:0000269" key="9">
    <source>
    </source>
</evidence>
<evidence type="ECO:0000303" key="10">
    <source>
    </source>
</evidence>
<evidence type="ECO:0000305" key="11"/>
<evidence type="ECO:0007744" key="12">
    <source>
    </source>
</evidence>
<evidence type="ECO:0007744" key="13">
    <source>
    </source>
</evidence>
<evidence type="ECO:0007744" key="14">
    <source>
    </source>
</evidence>
<evidence type="ECO:0007744" key="15">
    <source>
    </source>
</evidence>
<evidence type="ECO:0007744" key="16">
    <source>
    </source>
</evidence>
<evidence type="ECO:0007744" key="17">
    <source>
    </source>
</evidence>
<evidence type="ECO:0007744" key="18">
    <source>
    </source>
</evidence>
<evidence type="ECO:0007744" key="19">
    <source>
    </source>
</evidence>
<evidence type="ECO:0007744" key="20">
    <source>
    </source>
</evidence>
<evidence type="ECO:0007744" key="21">
    <source>
    </source>
</evidence>
<evidence type="ECO:0007744" key="22">
    <source>
    </source>
</evidence>
<protein>
    <recommendedName>
        <fullName>ATP-dependent RNA helicase DDX24</fullName>
        <ecNumber>3.6.4.13</ecNumber>
    </recommendedName>
    <alternativeName>
        <fullName>DEAD box protein 24</fullName>
    </alternativeName>
</protein>
<keyword id="KW-0007">Acetylation</keyword>
<keyword id="KW-0025">Alternative splicing</keyword>
<keyword id="KW-0067">ATP-binding</keyword>
<keyword id="KW-0963">Cytoplasm</keyword>
<keyword id="KW-0347">Helicase</keyword>
<keyword id="KW-0945">Host-virus interaction</keyword>
<keyword id="KW-0378">Hydrolase</keyword>
<keyword id="KW-1017">Isopeptide bond</keyword>
<keyword id="KW-0547">Nucleotide-binding</keyword>
<keyword id="KW-0539">Nucleus</keyword>
<keyword id="KW-0597">Phosphoprotein</keyword>
<keyword id="KW-1267">Proteomics identification</keyword>
<keyword id="KW-1185">Reference proteome</keyword>
<keyword id="KW-0694">RNA-binding</keyword>
<keyword id="KW-0832">Ubl conjugation</keyword>
<dbReference type="EC" id="3.6.4.13"/>
<dbReference type="EMBL" id="AF214731">
    <property type="protein sequence ID" value="AAG02169.1"/>
    <property type="molecule type" value="mRNA"/>
</dbReference>
<dbReference type="EMBL" id="AL136886">
    <property type="protein sequence ID" value="CAB66820.1"/>
    <property type="molecule type" value="mRNA"/>
</dbReference>
<dbReference type="EMBL" id="AK025162">
    <property type="protein sequence ID" value="BAB15079.1"/>
    <property type="molecule type" value="mRNA"/>
</dbReference>
<dbReference type="EMBL" id="BC008847">
    <property type="protein sequence ID" value="AAH08847.1"/>
    <property type="molecule type" value="mRNA"/>
</dbReference>
<dbReference type="EMBL" id="BC009406">
    <property type="protein sequence ID" value="AAH09406.1"/>
    <property type="molecule type" value="mRNA"/>
</dbReference>
<dbReference type="EMBL" id="BC096826">
    <property type="protein sequence ID" value="AAH96826.1"/>
    <property type="molecule type" value="mRNA"/>
</dbReference>
<dbReference type="CCDS" id="CCDS9918.1">
    <molecule id="Q9GZR7-1"/>
</dbReference>
<dbReference type="RefSeq" id="NP_065147.1">
    <molecule id="Q9GZR7-1"/>
    <property type="nucleotide sequence ID" value="NM_020414.4"/>
</dbReference>
<dbReference type="BioGRID" id="121353">
    <property type="interactions" value="602"/>
</dbReference>
<dbReference type="DIP" id="DIP-47301N"/>
<dbReference type="FunCoup" id="Q9GZR7">
    <property type="interactions" value="2819"/>
</dbReference>
<dbReference type="IntAct" id="Q9GZR7">
    <property type="interactions" value="215"/>
</dbReference>
<dbReference type="MINT" id="Q9GZR7"/>
<dbReference type="STRING" id="9606.ENSP00000481495"/>
<dbReference type="iPTMnet" id="Q9GZR7"/>
<dbReference type="MetOSite" id="Q9GZR7"/>
<dbReference type="PhosphoSitePlus" id="Q9GZR7"/>
<dbReference type="SwissPalm" id="Q9GZR7"/>
<dbReference type="BioMuta" id="DDX24"/>
<dbReference type="DMDM" id="18202929"/>
<dbReference type="jPOST" id="Q9GZR7"/>
<dbReference type="MassIVE" id="Q9GZR7"/>
<dbReference type="PaxDb" id="9606-ENSP00000481495"/>
<dbReference type="PeptideAtlas" id="Q9GZR7"/>
<dbReference type="ProteomicsDB" id="62284"/>
<dbReference type="ProteomicsDB" id="80121">
    <molecule id="Q9GZR7-1"/>
</dbReference>
<dbReference type="Pumba" id="Q9GZR7"/>
<dbReference type="Antibodypedia" id="108">
    <property type="antibodies" value="192 antibodies from 26 providers"/>
</dbReference>
<dbReference type="DNASU" id="57062"/>
<dbReference type="Ensembl" id="ENST00000613280.4">
    <molecule id="Q9GZR7-1"/>
    <property type="protein sequence ID" value="ENSP00000482106.1"/>
    <property type="gene ID" value="ENSG00000273761.5"/>
</dbReference>
<dbReference type="Ensembl" id="ENST00000618456.2">
    <molecule id="Q9GZR7-2"/>
    <property type="protein sequence ID" value="ENSP00000478630.1"/>
    <property type="gene ID" value="ENSG00000273761.5"/>
</dbReference>
<dbReference type="Ensembl" id="ENST00000621632.5">
    <molecule id="Q9GZR7-1"/>
    <property type="protein sequence ID" value="ENSP00000481495.1"/>
    <property type="gene ID" value="ENSG00000089737.19"/>
</dbReference>
<dbReference type="GeneID" id="57062"/>
<dbReference type="KEGG" id="hsa:57062"/>
<dbReference type="MANE-Select" id="ENST00000621632.5">
    <property type="protein sequence ID" value="ENSP00000481495.1"/>
    <property type="RefSeq nucleotide sequence ID" value="NM_020414.4"/>
    <property type="RefSeq protein sequence ID" value="NP_065147.1"/>
</dbReference>
<dbReference type="UCSC" id="uc001ycj.4">
    <molecule id="Q9GZR7-1"/>
    <property type="organism name" value="human"/>
</dbReference>
<dbReference type="AGR" id="HGNC:13266"/>
<dbReference type="CTD" id="57062"/>
<dbReference type="DisGeNET" id="57062"/>
<dbReference type="GeneCards" id="DDX24"/>
<dbReference type="HGNC" id="HGNC:13266">
    <property type="gene designation" value="DDX24"/>
</dbReference>
<dbReference type="HPA" id="ENSG00000089737">
    <property type="expression patterns" value="Low tissue specificity"/>
</dbReference>
<dbReference type="MalaCards" id="DDX24"/>
<dbReference type="MIM" id="606181">
    <property type="type" value="gene"/>
</dbReference>
<dbReference type="neXtProt" id="NX_Q9GZR7"/>
<dbReference type="OpenTargets" id="ENSG00000089737"/>
<dbReference type="PharmGKB" id="PA27211"/>
<dbReference type="VEuPathDB" id="HostDB:ENSG00000089737"/>
<dbReference type="eggNOG" id="KOG0347">
    <property type="taxonomic scope" value="Eukaryota"/>
</dbReference>
<dbReference type="GeneTree" id="ENSGT00550000074847"/>
<dbReference type="InParanoid" id="Q9GZR7"/>
<dbReference type="OMA" id="QMIQKAR"/>
<dbReference type="OrthoDB" id="4310724at2759"/>
<dbReference type="PAN-GO" id="Q9GZR7">
    <property type="GO annotations" value="1 GO annotation based on evolutionary models"/>
</dbReference>
<dbReference type="PhylomeDB" id="Q9GZR7"/>
<dbReference type="TreeFam" id="TF105837"/>
<dbReference type="PathwayCommons" id="Q9GZR7"/>
<dbReference type="SignaLink" id="Q9GZR7"/>
<dbReference type="SIGNOR" id="Q9GZR7"/>
<dbReference type="BioGRID-ORCS" id="57062">
    <property type="hits" value="686 hits in 1166 CRISPR screens"/>
</dbReference>
<dbReference type="CD-CODE" id="91857CE7">
    <property type="entry name" value="Nucleolus"/>
</dbReference>
<dbReference type="ChiTaRS" id="DDX24">
    <property type="organism name" value="human"/>
</dbReference>
<dbReference type="GeneWiki" id="DDX24"/>
<dbReference type="GenomeRNAi" id="57062"/>
<dbReference type="Pharos" id="Q9GZR7">
    <property type="development level" value="Tbio"/>
</dbReference>
<dbReference type="PRO" id="PR:Q9GZR7"/>
<dbReference type="Proteomes" id="UP000005640">
    <property type="component" value="Chromosome 14"/>
</dbReference>
<dbReference type="RNAct" id="Q9GZR7">
    <property type="molecule type" value="protein"/>
</dbReference>
<dbReference type="Bgee" id="ENSG00000089737">
    <property type="expression patterns" value="Expressed in right testis and 100 other cell types or tissues"/>
</dbReference>
<dbReference type="ExpressionAtlas" id="Q9GZR7">
    <property type="expression patterns" value="baseline and differential"/>
</dbReference>
<dbReference type="GO" id="GO:0005737">
    <property type="term" value="C:cytoplasm"/>
    <property type="evidence" value="ECO:0007669"/>
    <property type="project" value="UniProtKB-SubCell"/>
</dbReference>
<dbReference type="GO" id="GO:0016020">
    <property type="term" value="C:membrane"/>
    <property type="evidence" value="ECO:0007005"/>
    <property type="project" value="UniProtKB"/>
</dbReference>
<dbReference type="GO" id="GO:0005730">
    <property type="term" value="C:nucleolus"/>
    <property type="evidence" value="ECO:0000314"/>
    <property type="project" value="LIFEdb"/>
</dbReference>
<dbReference type="GO" id="GO:0005524">
    <property type="term" value="F:ATP binding"/>
    <property type="evidence" value="ECO:0007669"/>
    <property type="project" value="UniProtKB-KW"/>
</dbReference>
<dbReference type="GO" id="GO:0016887">
    <property type="term" value="F:ATP hydrolysis activity"/>
    <property type="evidence" value="ECO:0007669"/>
    <property type="project" value="RHEA"/>
</dbReference>
<dbReference type="GO" id="GO:0003723">
    <property type="term" value="F:RNA binding"/>
    <property type="evidence" value="ECO:0007005"/>
    <property type="project" value="UniProtKB"/>
</dbReference>
<dbReference type="GO" id="GO:0003724">
    <property type="term" value="F:RNA helicase activity"/>
    <property type="evidence" value="ECO:0000303"/>
    <property type="project" value="UniProtKB"/>
</dbReference>
<dbReference type="GO" id="GO:0016070">
    <property type="term" value="P:RNA metabolic process"/>
    <property type="evidence" value="ECO:0000303"/>
    <property type="project" value="UniProtKB"/>
</dbReference>
<dbReference type="CDD" id="cd17946">
    <property type="entry name" value="DEADc_DDX24"/>
    <property type="match status" value="1"/>
</dbReference>
<dbReference type="CDD" id="cd18787">
    <property type="entry name" value="SF2_C_DEAD"/>
    <property type="match status" value="1"/>
</dbReference>
<dbReference type="FunFam" id="3.40.50.300:FF:001059">
    <property type="entry name" value="ATP-dependent RNA helicase DDX24"/>
    <property type="match status" value="1"/>
</dbReference>
<dbReference type="Gene3D" id="3.40.50.300">
    <property type="entry name" value="P-loop containing nucleotide triphosphate hydrolases"/>
    <property type="match status" value="2"/>
</dbReference>
<dbReference type="InterPro" id="IPR011545">
    <property type="entry name" value="DEAD/DEAH_box_helicase_dom"/>
</dbReference>
<dbReference type="InterPro" id="IPR014001">
    <property type="entry name" value="Helicase_ATP-bd"/>
</dbReference>
<dbReference type="InterPro" id="IPR001650">
    <property type="entry name" value="Helicase_C-like"/>
</dbReference>
<dbReference type="InterPro" id="IPR027417">
    <property type="entry name" value="P-loop_NTPase"/>
</dbReference>
<dbReference type="InterPro" id="IPR000629">
    <property type="entry name" value="RNA-helicase_DEAD-box_CS"/>
</dbReference>
<dbReference type="InterPro" id="IPR014014">
    <property type="entry name" value="RNA_helicase_DEAD_Q_motif"/>
</dbReference>
<dbReference type="PANTHER" id="PTHR24031">
    <property type="entry name" value="RNA HELICASE"/>
    <property type="match status" value="1"/>
</dbReference>
<dbReference type="Pfam" id="PF00270">
    <property type="entry name" value="DEAD"/>
    <property type="match status" value="1"/>
</dbReference>
<dbReference type="Pfam" id="PF00271">
    <property type="entry name" value="Helicase_C"/>
    <property type="match status" value="1"/>
</dbReference>
<dbReference type="SMART" id="SM00487">
    <property type="entry name" value="DEXDc"/>
    <property type="match status" value="1"/>
</dbReference>
<dbReference type="SMART" id="SM00490">
    <property type="entry name" value="HELICc"/>
    <property type="match status" value="1"/>
</dbReference>
<dbReference type="SUPFAM" id="SSF52540">
    <property type="entry name" value="P-loop containing nucleoside triphosphate hydrolases"/>
    <property type="match status" value="2"/>
</dbReference>
<dbReference type="PROSITE" id="PS00039">
    <property type="entry name" value="DEAD_ATP_HELICASE"/>
    <property type="match status" value="1"/>
</dbReference>
<dbReference type="PROSITE" id="PS51192">
    <property type="entry name" value="HELICASE_ATP_BIND_1"/>
    <property type="match status" value="1"/>
</dbReference>
<dbReference type="PROSITE" id="PS51194">
    <property type="entry name" value="HELICASE_CTER"/>
    <property type="match status" value="1"/>
</dbReference>
<dbReference type="PROSITE" id="PS51195">
    <property type="entry name" value="Q_MOTIF"/>
    <property type="match status" value="1"/>
</dbReference>
<reference key="1">
    <citation type="journal article" date="2000" name="Genomics">
        <title>Cloning and characterization of human DDX24 and mouse Ddx24, two novel putative DEAD-box proteins, and mapping DDX24 to human chromosome 14q32.</title>
        <authorList>
            <person name="Zhao Y."/>
            <person name="Yu L."/>
            <person name="Fu Q."/>
            <person name="Chen W."/>
            <person name="Jiang J."/>
            <person name="Gao J."/>
            <person name="Zhao S."/>
        </authorList>
    </citation>
    <scope>NUCLEOTIDE SEQUENCE [MRNA] (ISOFORM 1)</scope>
</reference>
<reference key="2">
    <citation type="journal article" date="2001" name="Genome Res.">
        <title>Towards a catalog of human genes and proteins: sequencing and analysis of 500 novel complete protein coding human cDNAs.</title>
        <authorList>
            <person name="Wiemann S."/>
            <person name="Weil B."/>
            <person name="Wellenreuther R."/>
            <person name="Gassenhuber J."/>
            <person name="Glassl S."/>
            <person name="Ansorge W."/>
            <person name="Boecher M."/>
            <person name="Bloecker H."/>
            <person name="Bauersachs S."/>
            <person name="Blum H."/>
            <person name="Lauber J."/>
            <person name="Duesterhoeft A."/>
            <person name="Beyer A."/>
            <person name="Koehrer K."/>
            <person name="Strack N."/>
            <person name="Mewes H.-W."/>
            <person name="Ottenwaelder B."/>
            <person name="Obermaier B."/>
            <person name="Tampe J."/>
            <person name="Heubner D."/>
            <person name="Wambutt R."/>
            <person name="Korn B."/>
            <person name="Klein M."/>
            <person name="Poustka A."/>
        </authorList>
    </citation>
    <scope>NUCLEOTIDE SEQUENCE [LARGE SCALE MRNA] (ISOFORM 1)</scope>
    <source>
        <tissue>Testis</tissue>
    </source>
</reference>
<reference key="3">
    <citation type="journal article" date="2004" name="Nat. Genet.">
        <title>Complete sequencing and characterization of 21,243 full-length human cDNAs.</title>
        <authorList>
            <person name="Ota T."/>
            <person name="Suzuki Y."/>
            <person name="Nishikawa T."/>
            <person name="Otsuki T."/>
            <person name="Sugiyama T."/>
            <person name="Irie R."/>
            <person name="Wakamatsu A."/>
            <person name="Hayashi K."/>
            <person name="Sato H."/>
            <person name="Nagai K."/>
            <person name="Kimura K."/>
            <person name="Makita H."/>
            <person name="Sekine M."/>
            <person name="Obayashi M."/>
            <person name="Nishi T."/>
            <person name="Shibahara T."/>
            <person name="Tanaka T."/>
            <person name="Ishii S."/>
            <person name="Yamamoto J."/>
            <person name="Saito K."/>
            <person name="Kawai Y."/>
            <person name="Isono Y."/>
            <person name="Nakamura Y."/>
            <person name="Nagahari K."/>
            <person name="Murakami K."/>
            <person name="Yasuda T."/>
            <person name="Iwayanagi T."/>
            <person name="Wagatsuma M."/>
            <person name="Shiratori A."/>
            <person name="Sudo H."/>
            <person name="Hosoiri T."/>
            <person name="Kaku Y."/>
            <person name="Kodaira H."/>
            <person name="Kondo H."/>
            <person name="Sugawara M."/>
            <person name="Takahashi M."/>
            <person name="Kanda K."/>
            <person name="Yokoi T."/>
            <person name="Furuya T."/>
            <person name="Kikkawa E."/>
            <person name="Omura Y."/>
            <person name="Abe K."/>
            <person name="Kamihara K."/>
            <person name="Katsuta N."/>
            <person name="Sato K."/>
            <person name="Tanikawa M."/>
            <person name="Yamazaki M."/>
            <person name="Ninomiya K."/>
            <person name="Ishibashi T."/>
            <person name="Yamashita H."/>
            <person name="Murakawa K."/>
            <person name="Fujimori K."/>
            <person name="Tanai H."/>
            <person name="Kimata M."/>
            <person name="Watanabe M."/>
            <person name="Hiraoka S."/>
            <person name="Chiba Y."/>
            <person name="Ishida S."/>
            <person name="Ono Y."/>
            <person name="Takiguchi S."/>
            <person name="Watanabe S."/>
            <person name="Yosida M."/>
            <person name="Hotuta T."/>
            <person name="Kusano J."/>
            <person name="Kanehori K."/>
            <person name="Takahashi-Fujii A."/>
            <person name="Hara H."/>
            <person name="Tanase T.-O."/>
            <person name="Nomura Y."/>
            <person name="Togiya S."/>
            <person name="Komai F."/>
            <person name="Hara R."/>
            <person name="Takeuchi K."/>
            <person name="Arita M."/>
            <person name="Imose N."/>
            <person name="Musashino K."/>
            <person name="Yuuki H."/>
            <person name="Oshima A."/>
            <person name="Sasaki N."/>
            <person name="Aotsuka S."/>
            <person name="Yoshikawa Y."/>
            <person name="Matsunawa H."/>
            <person name="Ichihara T."/>
            <person name="Shiohata N."/>
            <person name="Sano S."/>
            <person name="Moriya S."/>
            <person name="Momiyama H."/>
            <person name="Satoh N."/>
            <person name="Takami S."/>
            <person name="Terashima Y."/>
            <person name="Suzuki O."/>
            <person name="Nakagawa S."/>
            <person name="Senoh A."/>
            <person name="Mizoguchi H."/>
            <person name="Goto Y."/>
            <person name="Shimizu F."/>
            <person name="Wakebe H."/>
            <person name="Hishigaki H."/>
            <person name="Watanabe T."/>
            <person name="Sugiyama A."/>
            <person name="Takemoto M."/>
            <person name="Kawakami B."/>
            <person name="Yamazaki M."/>
            <person name="Watanabe K."/>
            <person name="Kumagai A."/>
            <person name="Itakura S."/>
            <person name="Fukuzumi Y."/>
            <person name="Fujimori Y."/>
            <person name="Komiyama M."/>
            <person name="Tashiro H."/>
            <person name="Tanigami A."/>
            <person name="Fujiwara T."/>
            <person name="Ono T."/>
            <person name="Yamada K."/>
            <person name="Fujii Y."/>
            <person name="Ozaki K."/>
            <person name="Hirao M."/>
            <person name="Ohmori Y."/>
            <person name="Kawabata A."/>
            <person name="Hikiji T."/>
            <person name="Kobatake N."/>
            <person name="Inagaki H."/>
            <person name="Ikema Y."/>
            <person name="Okamoto S."/>
            <person name="Okitani R."/>
            <person name="Kawakami T."/>
            <person name="Noguchi S."/>
            <person name="Itoh T."/>
            <person name="Shigeta K."/>
            <person name="Senba T."/>
            <person name="Matsumura K."/>
            <person name="Nakajima Y."/>
            <person name="Mizuno T."/>
            <person name="Morinaga M."/>
            <person name="Sasaki M."/>
            <person name="Togashi T."/>
            <person name="Oyama M."/>
            <person name="Hata H."/>
            <person name="Watanabe M."/>
            <person name="Komatsu T."/>
            <person name="Mizushima-Sugano J."/>
            <person name="Satoh T."/>
            <person name="Shirai Y."/>
            <person name="Takahashi Y."/>
            <person name="Nakagawa K."/>
            <person name="Okumura K."/>
            <person name="Nagase T."/>
            <person name="Nomura N."/>
            <person name="Kikuchi H."/>
            <person name="Masuho Y."/>
            <person name="Yamashita R."/>
            <person name="Nakai K."/>
            <person name="Yada T."/>
            <person name="Nakamura Y."/>
            <person name="Ohara O."/>
            <person name="Isogai T."/>
            <person name="Sugano S."/>
        </authorList>
    </citation>
    <scope>NUCLEOTIDE SEQUENCE [LARGE SCALE MRNA] (ISOFORM 1)</scope>
    <source>
        <tissue>Colon</tissue>
    </source>
</reference>
<reference key="4">
    <citation type="journal article" date="2004" name="Genome Res.">
        <title>The status, quality, and expansion of the NIH full-length cDNA project: the Mammalian Gene Collection (MGC).</title>
        <authorList>
            <consortium name="The MGC Project Team"/>
        </authorList>
    </citation>
    <scope>NUCLEOTIDE SEQUENCE [LARGE SCALE MRNA] (ISOFORMS 1 AND 2)</scope>
    <source>
        <tissue>Chondrosarcoma</tissue>
        <tissue>Uterus</tissue>
    </source>
</reference>
<reference key="5">
    <citation type="journal article" date="2006" name="Cell">
        <title>Global, in vivo, and site-specific phosphorylation dynamics in signaling networks.</title>
        <authorList>
            <person name="Olsen J.V."/>
            <person name="Blagoev B."/>
            <person name="Gnad F."/>
            <person name="Macek B."/>
            <person name="Kumar C."/>
            <person name="Mortensen P."/>
            <person name="Mann M."/>
        </authorList>
    </citation>
    <scope>PHOSPHORYLATION [LARGE SCALE ANALYSIS] AT SER-82</scope>
    <scope>IDENTIFICATION BY MASS SPECTROMETRY [LARGE SCALE ANALYSIS]</scope>
    <source>
        <tissue>Cervix carcinoma</tissue>
    </source>
</reference>
<reference key="6">
    <citation type="journal article" date="2006" name="Nat. Biotechnol.">
        <title>A probability-based approach for high-throughput protein phosphorylation analysis and site localization.</title>
        <authorList>
            <person name="Beausoleil S.A."/>
            <person name="Villen J."/>
            <person name="Gerber S.A."/>
            <person name="Rush J."/>
            <person name="Gygi S.P."/>
        </authorList>
    </citation>
    <scope>PHOSPHORYLATION [LARGE SCALE ANALYSIS] AT SER-82</scope>
    <scope>IDENTIFICATION BY MASS SPECTROMETRY [LARGE SCALE ANALYSIS]</scope>
    <source>
        <tissue>Cervix carcinoma</tissue>
    </source>
</reference>
<reference key="7">
    <citation type="journal article" date="2008" name="Proc. Natl. Acad. Sci. U.S.A.">
        <title>A quantitative atlas of mitotic phosphorylation.</title>
        <authorList>
            <person name="Dephoure N."/>
            <person name="Zhou C."/>
            <person name="Villen J."/>
            <person name="Beausoleil S.A."/>
            <person name="Bakalarski C.E."/>
            <person name="Elledge S.J."/>
            <person name="Gygi S.P."/>
        </authorList>
    </citation>
    <scope>PHOSPHORYLATION [LARGE SCALE ANALYSIS] AT SER-82; SER-94; SER-287; SER-295 AND THR-302</scope>
    <scope>IDENTIFICATION BY MASS SPECTROMETRY [LARGE SCALE ANALYSIS]</scope>
    <source>
        <tissue>Cervix carcinoma</tissue>
    </source>
</reference>
<reference key="8">
    <citation type="journal article" date="2008" name="Proteomics">
        <title>Large-scale phosphoproteome analysis of human liver tissue by enrichment and fractionation of phosphopeptides with strong anion exchange chromatography.</title>
        <authorList>
            <person name="Han G."/>
            <person name="Ye M."/>
            <person name="Zhou H."/>
            <person name="Jiang X."/>
            <person name="Feng S."/>
            <person name="Jiang X."/>
            <person name="Tian R."/>
            <person name="Wan D."/>
            <person name="Zou H."/>
            <person name="Gu J."/>
        </authorList>
    </citation>
    <scope>PHOSPHORYLATION [LARGE SCALE ANALYSIS] AT SER-82</scope>
    <scope>IDENTIFICATION BY MASS SPECTROMETRY [LARGE SCALE ANALYSIS]</scope>
    <source>
        <tissue>Liver</tissue>
    </source>
</reference>
<reference key="9">
    <citation type="journal article" date="2008" name="Virology">
        <title>The requirement of the DEAD-box protein DDX24 for the packaging of human immunodeficiency virus type 1 RNA.</title>
        <authorList>
            <person name="Ma J."/>
            <person name="Rong L."/>
            <person name="Zhou Y."/>
            <person name="Roy B.B."/>
            <person name="Lu J."/>
            <person name="Abrahamyan L."/>
            <person name="Mouland A.J."/>
            <person name="Pan Q."/>
            <person name="Liang C."/>
        </authorList>
    </citation>
    <scope>FUNCTION (MICROBIAL INFECTION)</scope>
    <scope>INTERACTION WITH HIV-1 GAG AND REV (MICROBIAL INFECTION)</scope>
</reference>
<reference key="10">
    <citation type="journal article" date="2009" name="Anal. Chem.">
        <title>Lys-N and trypsin cover complementary parts of the phosphoproteome in a refined SCX-based approach.</title>
        <authorList>
            <person name="Gauci S."/>
            <person name="Helbig A.O."/>
            <person name="Slijper M."/>
            <person name="Krijgsveld J."/>
            <person name="Heck A.J."/>
            <person name="Mohammed S."/>
        </authorList>
    </citation>
    <scope>IDENTIFICATION BY MASS SPECTROMETRY [LARGE SCALE ANALYSIS]</scope>
</reference>
<reference key="11">
    <citation type="journal article" date="2009" name="Sci. Signal.">
        <title>Quantitative phosphoproteomic analysis of T cell receptor signaling reveals system-wide modulation of protein-protein interactions.</title>
        <authorList>
            <person name="Mayya V."/>
            <person name="Lundgren D.H."/>
            <person name="Hwang S.-I."/>
            <person name="Rezaul K."/>
            <person name="Wu L."/>
            <person name="Eng J.K."/>
            <person name="Rodionov V."/>
            <person name="Han D.K."/>
        </authorList>
    </citation>
    <scope>PHOSPHORYLATION [LARGE SCALE ANALYSIS] AT SER-82; SER-94; SER-287 AND SER-295</scope>
    <scope>IDENTIFICATION BY MASS SPECTROMETRY [LARGE SCALE ANALYSIS]</scope>
    <source>
        <tissue>Leukemic T-cell</tissue>
    </source>
</reference>
<reference key="12">
    <citation type="journal article" date="2009" name="Science">
        <title>Lysine acetylation targets protein complexes and co-regulates major cellular functions.</title>
        <authorList>
            <person name="Choudhary C."/>
            <person name="Kumar C."/>
            <person name="Gnad F."/>
            <person name="Nielsen M.L."/>
            <person name="Rehman M."/>
            <person name="Walther T.C."/>
            <person name="Olsen J.V."/>
            <person name="Mann M."/>
        </authorList>
    </citation>
    <scope>ACETYLATION [LARGE SCALE ANALYSIS] AT LYS-17 AND LYS-71</scope>
    <scope>IDENTIFICATION BY MASS SPECTROMETRY [LARGE SCALE ANALYSIS]</scope>
</reference>
<reference key="13">
    <citation type="journal article" date="2010" name="Sci. Signal.">
        <title>Quantitative phosphoproteomics reveals widespread full phosphorylation site occupancy during mitosis.</title>
        <authorList>
            <person name="Olsen J.V."/>
            <person name="Vermeulen M."/>
            <person name="Santamaria A."/>
            <person name="Kumar C."/>
            <person name="Miller M.L."/>
            <person name="Jensen L.J."/>
            <person name="Gnad F."/>
            <person name="Cox J."/>
            <person name="Jensen T.S."/>
            <person name="Nigg E.A."/>
            <person name="Brunak S."/>
            <person name="Mann M."/>
        </authorList>
    </citation>
    <scope>PHOSPHORYLATION [LARGE SCALE ANALYSIS] AT SER-82</scope>
    <scope>IDENTIFICATION BY MASS SPECTROMETRY [LARGE SCALE ANALYSIS]</scope>
    <source>
        <tissue>Cervix carcinoma</tissue>
    </source>
</reference>
<reference key="14">
    <citation type="journal article" date="2011" name="BMC Syst. Biol.">
        <title>Initial characterization of the human central proteome.</title>
        <authorList>
            <person name="Burkard T.R."/>
            <person name="Planyavsky M."/>
            <person name="Kaupe I."/>
            <person name="Breitwieser F.P."/>
            <person name="Buerckstuemmer T."/>
            <person name="Bennett K.L."/>
            <person name="Superti-Furga G."/>
            <person name="Colinge J."/>
        </authorList>
    </citation>
    <scope>IDENTIFICATION BY MASS SPECTROMETRY [LARGE SCALE ANALYSIS]</scope>
</reference>
<reference key="15">
    <citation type="journal article" date="2011" name="Sci. Signal.">
        <title>System-wide temporal characterization of the proteome and phosphoproteome of human embryonic stem cell differentiation.</title>
        <authorList>
            <person name="Rigbolt K.T."/>
            <person name="Prokhorova T.A."/>
            <person name="Akimov V."/>
            <person name="Henningsen J."/>
            <person name="Johansen P.T."/>
            <person name="Kratchmarova I."/>
            <person name="Kassem M."/>
            <person name="Mann M."/>
            <person name="Olsen J.V."/>
            <person name="Blagoev B."/>
        </authorList>
    </citation>
    <scope>PHOSPHORYLATION [LARGE SCALE ANALYSIS] AT SER-82</scope>
    <scope>IDENTIFICATION BY MASS SPECTROMETRY [LARGE SCALE ANALYSIS]</scope>
</reference>
<reference key="16">
    <citation type="journal article" date="2012" name="Proc. Natl. Acad. Sci. U.S.A.">
        <title>N-terminal acetylome analyses and functional insights of the N-terminal acetyltransferase NatB.</title>
        <authorList>
            <person name="Van Damme P."/>
            <person name="Lasa M."/>
            <person name="Polevoda B."/>
            <person name="Gazquez C."/>
            <person name="Elosegui-Artola A."/>
            <person name="Kim D.S."/>
            <person name="De Juan-Pardo E."/>
            <person name="Demeyer K."/>
            <person name="Hole K."/>
            <person name="Larrea E."/>
            <person name="Timmerman E."/>
            <person name="Prieto J."/>
            <person name="Arnesen T."/>
            <person name="Sherman F."/>
            <person name="Gevaert K."/>
            <person name="Aldabe R."/>
        </authorList>
    </citation>
    <scope>IDENTIFICATION BY MASS SPECTROMETRY [LARGE SCALE ANALYSIS]</scope>
</reference>
<reference key="17">
    <citation type="journal article" date="2013" name="J. Proteome Res.">
        <title>Toward a comprehensive characterization of a human cancer cell phosphoproteome.</title>
        <authorList>
            <person name="Zhou H."/>
            <person name="Di Palma S."/>
            <person name="Preisinger C."/>
            <person name="Peng M."/>
            <person name="Polat A.N."/>
            <person name="Heck A.J."/>
            <person name="Mohammed S."/>
        </authorList>
    </citation>
    <scope>PHOSPHORYLATION [LARGE SCALE ANALYSIS] AT SER-82 AND SER-94</scope>
    <scope>IDENTIFICATION BY MASS SPECTROMETRY [LARGE SCALE ANALYSIS]</scope>
    <source>
        <tissue>Cervix carcinoma</tissue>
        <tissue>Erythroleukemia</tissue>
    </source>
</reference>
<reference key="18">
    <citation type="journal article" date="2013" name="PLoS Pathog.">
        <title>DDX24 negatively regulates cytosolic RNA-mediated innate immune signaling.</title>
        <authorList>
            <person name="Ma Z."/>
            <person name="Moore R."/>
            <person name="Xu X."/>
            <person name="Barber G.N."/>
        </authorList>
    </citation>
    <scope>FUNCTION</scope>
    <scope>INDUCTION BY TYPE I INTERFERON</scope>
    <scope>INTERACTION WITH FADD AND RIPK1</scope>
    <scope>SUBCELLULAR LOCATION</scope>
</reference>
<reference key="19">
    <citation type="journal article" date="2014" name="Mol. Cell. Biol.">
        <title>MDM2 mediates nonproteolytic polyubiquitylation of the DEAD-Box RNA helicase DDX24.</title>
        <authorList>
            <person name="Yamauchi T."/>
            <person name="Nishiyama M."/>
            <person name="Moroishi T."/>
            <person name="Yumimoto K."/>
            <person name="Nakayama K.I."/>
        </authorList>
    </citation>
    <scope>UBIQUITINATION</scope>
    <scope>FUNCTION</scope>
    <scope>SUBCELLULAR LOCATION</scope>
    <scope>INTERACTION WITH NIP7 AND NCL</scope>
</reference>
<reference key="20">
    <citation type="journal article" date="2014" name="J. Proteomics">
        <title>An enzyme assisted RP-RPLC approach for in-depth analysis of human liver phosphoproteome.</title>
        <authorList>
            <person name="Bian Y."/>
            <person name="Song C."/>
            <person name="Cheng K."/>
            <person name="Dong M."/>
            <person name="Wang F."/>
            <person name="Huang J."/>
            <person name="Sun D."/>
            <person name="Wang L."/>
            <person name="Ye M."/>
            <person name="Zou H."/>
        </authorList>
    </citation>
    <scope>PHOSPHORYLATION [LARGE SCALE ANALYSIS] AT SER-60</scope>
    <scope>IDENTIFICATION BY MASS SPECTROMETRY [LARGE SCALE ANALYSIS]</scope>
    <source>
        <tissue>Liver</tissue>
    </source>
</reference>
<reference key="21">
    <citation type="journal article" date="2017" name="Nat. Struct. Mol. Biol.">
        <title>Site-specific mapping of the human SUMO proteome reveals co-modification with phosphorylation.</title>
        <authorList>
            <person name="Hendriks I.A."/>
            <person name="Lyon D."/>
            <person name="Young C."/>
            <person name="Jensen L.J."/>
            <person name="Vertegaal A.C."/>
            <person name="Nielsen M.L."/>
        </authorList>
    </citation>
    <scope>SUMOYLATION [LARGE SCALE ANALYSIS] AT LYS-370; LYS-624; LYS-808 AND LYS-825</scope>
    <scope>IDENTIFICATION BY MASS SPECTROMETRY [LARGE SCALE ANALYSIS]</scope>
</reference>
<reference key="22">
    <citation type="journal article" date="2016" name="Oncogene">
        <title>Negative regulation of the p300-p53 interplay by DDX24.</title>
        <authorList>
            <person name="Shi D."/>
            <person name="Dai C."/>
            <person name="Qin J."/>
            <person name="Gu W."/>
        </authorList>
    </citation>
    <scope>FUNCTION</scope>
    <scope>INTERACTION WITH EP300</scope>
</reference>
<reference key="23">
    <citation type="journal article" date="2022" name="Viruses">
        <title>DExD/H Box Helicases DDX24 and DDX49 Inhibit Reactivation of Kaposi's Sarcoma Associated Herpesvirus by Interacting with Viral mRNAs.</title>
        <authorList>
            <person name="Serfecz J.C."/>
            <person name="Hong Y."/>
            <person name="Gay L.A."/>
            <person name="Shekhar R."/>
            <person name="Turner P.C."/>
            <person name="Renne R."/>
        </authorList>
    </citation>
    <scope>FUNCTION</scope>
</reference>
<organism>
    <name type="scientific">Homo sapiens</name>
    <name type="common">Human</name>
    <dbReference type="NCBI Taxonomy" id="9606"/>
    <lineage>
        <taxon>Eukaryota</taxon>
        <taxon>Metazoa</taxon>
        <taxon>Chordata</taxon>
        <taxon>Craniata</taxon>
        <taxon>Vertebrata</taxon>
        <taxon>Euteleostomi</taxon>
        <taxon>Mammalia</taxon>
        <taxon>Eutheria</taxon>
        <taxon>Euarchontoglires</taxon>
        <taxon>Primates</taxon>
        <taxon>Haplorrhini</taxon>
        <taxon>Catarrhini</taxon>
        <taxon>Hominidae</taxon>
        <taxon>Homo</taxon>
    </lineage>
</organism>